<comment type="function">
    <text evidence="5 6">Early endosomal protein that functions to recruit SMAD2/SMAD3 to intracellular membranes and to the TGF-beta receptor. Plays a significant role in TGF-mediated signaling by regulating the subcellular location of SMAD2 and SMAD3 and modulating the transcriptional activity of the SMAD3/SMAD4 complex. Possibly associated with TGF-beta receptor internalization.</text>
</comment>
<comment type="subunit">
    <text evidence="3 4 5 6">Interacts (via the SBD region) with SMAD2; the interaction recruits SMAD2 to the TGF-beta receptor and is disrupted by phosphorylation of SMAD2 upon TGF-beta receptor activation. Interacts with SMAD3. Interacts with TGFBR1 and TGFBR2; the interaction recruits SMAD2 to the TGF-beta receptor. Interacts with PML.</text>
</comment>
<comment type="interaction">
    <interactant intactId="EBI-296817">
        <id>O95405</id>
    </interactant>
    <interactant intactId="EBI-296693">
        <id>Q9Y561</id>
        <label>LRP12</label>
    </interactant>
    <organismsDiffer>false</organismsDiffer>
    <experiments>2</experiments>
</comment>
<comment type="interaction">
    <interactant intactId="EBI-296817">
        <id>O95405</id>
    </interactant>
    <interactant intactId="EBI-357253">
        <id>P62136</id>
        <label>PPP1CA</label>
    </interactant>
    <organismsDiffer>false</organismsDiffer>
    <experiments>4</experiments>
</comment>
<comment type="interaction">
    <interactant intactId="EBI-296817">
        <id>O95405</id>
    </interactant>
    <interactant intactId="EBI-356283">
        <id>P36873</id>
        <label>PPP1CC</label>
    </interactant>
    <organismsDiffer>false</organismsDiffer>
    <experiments>8</experiments>
</comment>
<comment type="interaction">
    <interactant intactId="EBI-296817">
        <id>O95405</id>
    </interactant>
    <interactant intactId="EBI-1394177">
        <id>P08100</id>
        <label>RHO</label>
    </interactant>
    <organismsDiffer>false</organismsDiffer>
    <experiments>2</experiments>
</comment>
<comment type="interaction">
    <interactant intactId="EBI-296817">
        <id>O95405</id>
    </interactant>
    <interactant intactId="EBI-1040141">
        <id>Q15796</id>
        <label>SMAD2</label>
    </interactant>
    <organismsDiffer>false</organismsDiffer>
    <experiments>8</experiments>
</comment>
<comment type="interaction">
    <interactant intactId="EBI-296817">
        <id>O95405</id>
    </interactant>
    <interactant intactId="EBI-347161">
        <id>P84022</id>
        <label>SMAD3</label>
    </interactant>
    <organismsDiffer>false</organismsDiffer>
    <experiments>7</experiments>
</comment>
<comment type="interaction">
    <interactant intactId="EBI-296817">
        <id>O95405</id>
    </interactant>
    <interactant intactId="EBI-1394295">
        <id>Q13277</id>
        <label>STX3</label>
    </interactant>
    <organismsDiffer>false</organismsDiffer>
    <experiments>3</experiments>
</comment>
<comment type="subcellular location">
    <subcellularLocation>
        <location>Cytoplasm</location>
    </subcellularLocation>
    <subcellularLocation>
        <location>Early endosome membrane</location>
    </subcellularLocation>
</comment>
<comment type="alternative products">
    <event type="alternative splicing"/>
    <isoform>
        <id>O95405-1</id>
        <name>1</name>
        <sequence type="displayed"/>
    </isoform>
    <isoform>
        <id>O95405-2</id>
        <name>2</name>
        <sequence type="described" ref="VSP_004315"/>
    </isoform>
    <isoform>
        <id>O95405-3</id>
        <name>3</name>
        <sequence type="described" ref="VSP_004316 VSP_004317"/>
    </isoform>
</comment>
<comment type="tissue specificity">
    <text>Ubiquitous. In the brain found primarily in the cerebrovascular smooth muscle cells and reactive astrocytes.</text>
</comment>
<comment type="domain">
    <text>The SMAD binding domain (SBD) interacts with the MH2 domains of SMAD2 or SMAD3.</text>
</comment>
<comment type="domain">
    <text>The FYVE-type zinc finger is necessary and sufficient for its localization into early endosomes and mediates the association with PI3P.</text>
</comment>
<comment type="miscellaneous">
    <molecule>Isoform 2</molecule>
    <text evidence="8">May be produced at very low levels due to a premature stop codon in the mRNA, leading to nonsense-mediated mRNA decay.</text>
</comment>
<comment type="sequence caution" evidence="8">
    <conflict type="erroneous initiation">
        <sequence resource="EMBL-CDS" id="AAC99462"/>
    </conflict>
    <text>Truncated N-terminus.</text>
</comment>
<comment type="sequence caution" evidence="8">
    <conflict type="frameshift">
        <sequence resource="EMBL-CDS" id="AAD31694"/>
    </conflict>
</comment>
<reference key="1">
    <citation type="journal article" date="1998" name="Cell">
        <title>SARA, a FYVE domain protein that recruits Smad2 to the TGFbeta receptor.</title>
        <authorList>
            <person name="Tsukazaki T."/>
            <person name="Chiang T.A."/>
            <person name="Davison A.F."/>
            <person name="Attisano L."/>
            <person name="Wrana J.L."/>
        </authorList>
    </citation>
    <scope>NUCLEOTIDE SEQUENCE [MRNA] (ISOFORM 1)</scope>
    <scope>INTERACTION WITH SMAD2; SMAD3; TGFBR1 AND TGFBR2</scope>
    <scope>FUNCTION</scope>
    <scope>SUBCELLULAR LOCATION</scope>
</reference>
<reference key="2">
    <citation type="journal article" date="1998" name="Brain Res. Mol. Brain Res.">
        <title>Identification of a novel serine protease-like molecule in human brain.</title>
        <authorList>
            <person name="Meckelein B."/>
            <person name="Marshall D.C.L."/>
            <person name="Conn K.J."/>
            <person name="Pietropaolo M."/>
            <person name="Van Nostrand W."/>
            <person name="Abraham C.R."/>
        </authorList>
    </citation>
    <scope>NUCLEOTIDE SEQUENCE [MRNA] (ISOFORMS 2 AND 3)</scope>
    <source>
        <tissue>Fetal brain</tissue>
    </source>
</reference>
<reference key="3">
    <citation type="journal article" date="2006" name="Nature">
        <title>The DNA sequence and biological annotation of human chromosome 1.</title>
        <authorList>
            <person name="Gregory S.G."/>
            <person name="Barlow K.F."/>
            <person name="McLay K.E."/>
            <person name="Kaul R."/>
            <person name="Swarbreck D."/>
            <person name="Dunham A."/>
            <person name="Scott C.E."/>
            <person name="Howe K.L."/>
            <person name="Woodfine K."/>
            <person name="Spencer C.C.A."/>
            <person name="Jones M.C."/>
            <person name="Gillson C."/>
            <person name="Searle S."/>
            <person name="Zhou Y."/>
            <person name="Kokocinski F."/>
            <person name="McDonald L."/>
            <person name="Evans R."/>
            <person name="Phillips K."/>
            <person name="Atkinson A."/>
            <person name="Cooper R."/>
            <person name="Jones C."/>
            <person name="Hall R.E."/>
            <person name="Andrews T.D."/>
            <person name="Lloyd C."/>
            <person name="Ainscough R."/>
            <person name="Almeida J.P."/>
            <person name="Ambrose K.D."/>
            <person name="Anderson F."/>
            <person name="Andrew R.W."/>
            <person name="Ashwell R.I.S."/>
            <person name="Aubin K."/>
            <person name="Babbage A.K."/>
            <person name="Bagguley C.L."/>
            <person name="Bailey J."/>
            <person name="Beasley H."/>
            <person name="Bethel G."/>
            <person name="Bird C.P."/>
            <person name="Bray-Allen S."/>
            <person name="Brown J.Y."/>
            <person name="Brown A.J."/>
            <person name="Buckley D."/>
            <person name="Burton J."/>
            <person name="Bye J."/>
            <person name="Carder C."/>
            <person name="Chapman J.C."/>
            <person name="Clark S.Y."/>
            <person name="Clarke G."/>
            <person name="Clee C."/>
            <person name="Cobley V."/>
            <person name="Collier R.E."/>
            <person name="Corby N."/>
            <person name="Coville G.J."/>
            <person name="Davies J."/>
            <person name="Deadman R."/>
            <person name="Dunn M."/>
            <person name="Earthrowl M."/>
            <person name="Ellington A.G."/>
            <person name="Errington H."/>
            <person name="Frankish A."/>
            <person name="Frankland J."/>
            <person name="French L."/>
            <person name="Garner P."/>
            <person name="Garnett J."/>
            <person name="Gay L."/>
            <person name="Ghori M.R.J."/>
            <person name="Gibson R."/>
            <person name="Gilby L.M."/>
            <person name="Gillett W."/>
            <person name="Glithero R.J."/>
            <person name="Grafham D.V."/>
            <person name="Griffiths C."/>
            <person name="Griffiths-Jones S."/>
            <person name="Grocock R."/>
            <person name="Hammond S."/>
            <person name="Harrison E.S.I."/>
            <person name="Hart E."/>
            <person name="Haugen E."/>
            <person name="Heath P.D."/>
            <person name="Holmes S."/>
            <person name="Holt K."/>
            <person name="Howden P.J."/>
            <person name="Hunt A.R."/>
            <person name="Hunt S.E."/>
            <person name="Hunter G."/>
            <person name="Isherwood J."/>
            <person name="James R."/>
            <person name="Johnson C."/>
            <person name="Johnson D."/>
            <person name="Joy A."/>
            <person name="Kay M."/>
            <person name="Kershaw J.K."/>
            <person name="Kibukawa M."/>
            <person name="Kimberley A.M."/>
            <person name="King A."/>
            <person name="Knights A.J."/>
            <person name="Lad H."/>
            <person name="Laird G."/>
            <person name="Lawlor S."/>
            <person name="Leongamornlert D.A."/>
            <person name="Lloyd D.M."/>
            <person name="Loveland J."/>
            <person name="Lovell J."/>
            <person name="Lush M.J."/>
            <person name="Lyne R."/>
            <person name="Martin S."/>
            <person name="Mashreghi-Mohammadi M."/>
            <person name="Matthews L."/>
            <person name="Matthews N.S.W."/>
            <person name="McLaren S."/>
            <person name="Milne S."/>
            <person name="Mistry S."/>
            <person name="Moore M.J.F."/>
            <person name="Nickerson T."/>
            <person name="O'Dell C.N."/>
            <person name="Oliver K."/>
            <person name="Palmeiri A."/>
            <person name="Palmer S.A."/>
            <person name="Parker A."/>
            <person name="Patel D."/>
            <person name="Pearce A.V."/>
            <person name="Peck A.I."/>
            <person name="Pelan S."/>
            <person name="Phelps K."/>
            <person name="Phillimore B.J."/>
            <person name="Plumb R."/>
            <person name="Rajan J."/>
            <person name="Raymond C."/>
            <person name="Rouse G."/>
            <person name="Saenphimmachak C."/>
            <person name="Sehra H.K."/>
            <person name="Sheridan E."/>
            <person name="Shownkeen R."/>
            <person name="Sims S."/>
            <person name="Skuce C.D."/>
            <person name="Smith M."/>
            <person name="Steward C."/>
            <person name="Subramanian S."/>
            <person name="Sycamore N."/>
            <person name="Tracey A."/>
            <person name="Tromans A."/>
            <person name="Van Helmond Z."/>
            <person name="Wall M."/>
            <person name="Wallis J.M."/>
            <person name="White S."/>
            <person name="Whitehead S.L."/>
            <person name="Wilkinson J.E."/>
            <person name="Willey D.L."/>
            <person name="Williams H."/>
            <person name="Wilming L."/>
            <person name="Wray P.W."/>
            <person name="Wu Z."/>
            <person name="Coulson A."/>
            <person name="Vaudin M."/>
            <person name="Sulston J.E."/>
            <person name="Durbin R.M."/>
            <person name="Hubbard T."/>
            <person name="Wooster R."/>
            <person name="Dunham I."/>
            <person name="Carter N.P."/>
            <person name="McVean G."/>
            <person name="Ross M.T."/>
            <person name="Harrow J."/>
            <person name="Olson M.V."/>
            <person name="Beck S."/>
            <person name="Rogers J."/>
            <person name="Bentley D.R."/>
        </authorList>
    </citation>
    <scope>NUCLEOTIDE SEQUENCE [LARGE SCALE GENOMIC DNA]</scope>
</reference>
<reference key="4">
    <citation type="submission" date="2005-09" db="EMBL/GenBank/DDBJ databases">
        <authorList>
            <person name="Mural R.J."/>
            <person name="Istrail S."/>
            <person name="Sutton G.G."/>
            <person name="Florea L."/>
            <person name="Halpern A.L."/>
            <person name="Mobarry C.M."/>
            <person name="Lippert R."/>
            <person name="Walenz B."/>
            <person name="Shatkay H."/>
            <person name="Dew I."/>
            <person name="Miller J.R."/>
            <person name="Flanigan M.J."/>
            <person name="Edwards N.J."/>
            <person name="Bolanos R."/>
            <person name="Fasulo D."/>
            <person name="Halldorsson B.V."/>
            <person name="Hannenhalli S."/>
            <person name="Turner R."/>
            <person name="Yooseph S."/>
            <person name="Lu F."/>
            <person name="Nusskern D.R."/>
            <person name="Shue B.C."/>
            <person name="Zheng X.H."/>
            <person name="Zhong F."/>
            <person name="Delcher A.L."/>
            <person name="Huson D.H."/>
            <person name="Kravitz S.A."/>
            <person name="Mouchard L."/>
            <person name="Reinert K."/>
            <person name="Remington K.A."/>
            <person name="Clark A.G."/>
            <person name="Waterman M.S."/>
            <person name="Eichler E.E."/>
            <person name="Adams M.D."/>
            <person name="Hunkapiller M.W."/>
            <person name="Myers E.W."/>
            <person name="Venter J.C."/>
        </authorList>
    </citation>
    <scope>NUCLEOTIDE SEQUENCE [LARGE SCALE GENOMIC DNA]</scope>
</reference>
<reference key="5">
    <citation type="journal article" date="2004" name="Genome Res.">
        <title>The status, quality, and expansion of the NIH full-length cDNA project: the Mammalian Gene Collection (MGC).</title>
        <authorList>
            <consortium name="The MGC Project Team"/>
        </authorList>
    </citation>
    <scope>NUCLEOTIDE SEQUENCE [LARGE SCALE MRNA] (ISOFORM 1)</scope>
    <source>
        <tissue>Testis</tissue>
    </source>
</reference>
<reference key="6">
    <citation type="journal article" date="2002" name="J. Biol. Chem.">
        <title>Early endosomal regulation of Smad-dependent signaling in endothelial cells.</title>
        <authorList>
            <person name="Panopoulou E."/>
            <person name="Gillooly D.J."/>
            <person name="Wrana J.L."/>
            <person name="Zerial M."/>
            <person name="Stenmark H."/>
            <person name="Murphy C."/>
            <person name="Fotsis T."/>
        </authorList>
    </citation>
    <scope>SUBCELLULAR LOCATION</scope>
</reference>
<reference key="7">
    <citation type="journal article" date="2004" name="Genome Biol.">
        <title>An unappreciated role for RNA surveillance.</title>
        <authorList>
            <person name="Hillman R.T."/>
            <person name="Green R.E."/>
            <person name="Brenner S.E."/>
        </authorList>
    </citation>
    <scope>SPLICE ISOFORM(S) THAT ARE POTENTIAL NMD TARGET(S)</scope>
</reference>
<reference key="8">
    <citation type="journal article" date="2004" name="Nature">
        <title>Cytoplasmic PML function in TGF-beta signalling.</title>
        <authorList>
            <person name="Lin H.K."/>
            <person name="Bergmann S."/>
            <person name="Pandolfi P.P."/>
        </authorList>
    </citation>
    <scope>FUNCTION</scope>
    <scope>SUBCELLULAR LOCATION</scope>
    <scope>INTERACTION WITH PML; SMAD2 AND SMAD3</scope>
</reference>
<reference key="9">
    <citation type="journal article" date="2008" name="Proc. Natl. Acad. Sci. U.S.A.">
        <title>A quantitative atlas of mitotic phosphorylation.</title>
        <authorList>
            <person name="Dephoure N."/>
            <person name="Zhou C."/>
            <person name="Villen J."/>
            <person name="Beausoleil S.A."/>
            <person name="Bakalarski C.E."/>
            <person name="Elledge S.J."/>
            <person name="Gygi S.P."/>
        </authorList>
    </citation>
    <scope>IDENTIFICATION BY MASS SPECTROMETRY [LARGE SCALE ANALYSIS]</scope>
    <source>
        <tissue>Cervix carcinoma</tissue>
    </source>
</reference>
<reference key="10">
    <citation type="journal article" date="2013" name="J. Proteome Res.">
        <title>Toward a comprehensive characterization of a human cancer cell phosphoproteome.</title>
        <authorList>
            <person name="Zhou H."/>
            <person name="Di Palma S."/>
            <person name="Preisinger C."/>
            <person name="Peng M."/>
            <person name="Polat A.N."/>
            <person name="Heck A.J."/>
            <person name="Mohammed S."/>
        </authorList>
    </citation>
    <scope>PHOSPHORYLATION [LARGE SCALE ANALYSIS] AT SER-306</scope>
    <scope>IDENTIFICATION BY MASS SPECTROMETRY [LARGE SCALE ANALYSIS]</scope>
    <source>
        <tissue>Erythroleukemia</tissue>
    </source>
</reference>
<reference key="11">
    <citation type="journal article" date="2014" name="J. Proteomics">
        <title>An enzyme assisted RP-RPLC approach for in-depth analysis of human liver phosphoproteome.</title>
        <authorList>
            <person name="Bian Y."/>
            <person name="Song C."/>
            <person name="Cheng K."/>
            <person name="Dong M."/>
            <person name="Wang F."/>
            <person name="Huang J."/>
            <person name="Sun D."/>
            <person name="Wang L."/>
            <person name="Ye M."/>
            <person name="Zou H."/>
        </authorList>
    </citation>
    <scope>PHOSPHORYLATION [LARGE SCALE ANALYSIS] AT SER-668</scope>
    <scope>IDENTIFICATION BY MASS SPECTROMETRY [LARGE SCALE ANALYSIS]</scope>
    <source>
        <tissue>Liver</tissue>
    </source>
</reference>
<reference key="12">
    <citation type="journal article" date="2000" name="Science">
        <title>Structural basis of Smad2 recognition by the Smad anchor for receptor activation.</title>
        <authorList>
            <person name="Wu G."/>
            <person name="Chen Y.-G."/>
            <person name="Ozdamar B."/>
            <person name="Gyuricza C.A."/>
            <person name="Chong P.A."/>
            <person name="Wrana J.L."/>
            <person name="Massague J."/>
            <person name="Shi Y."/>
        </authorList>
    </citation>
    <scope>X-RAY CRYSTALLOGRAPHY (2.2 ANGSTROMS) OF 771-811 IN COMPLEX WITH SMAD2</scope>
    <scope>MUTAGENESIS</scope>
</reference>
<reference key="13">
    <citation type="journal article" date="2002" name="Genes Dev.">
        <title>Smad3 allostery links TGF-beta receptor kinase activation to transcriptional control.</title>
        <authorList>
            <person name="Qin B.Y."/>
            <person name="Lam S.S."/>
            <person name="Correia J.J."/>
            <person name="Lin K."/>
        </authorList>
    </citation>
    <scope>X-RAY CRYSTALLOGRAPHY (2.74 ANGSTROMS) OF 773-810 IN COMPLEX WITH SMAD3</scope>
</reference>
<dbReference type="EMBL" id="AF104304">
    <property type="protein sequence ID" value="AAC99462.1"/>
    <property type="status" value="ALT_INIT"/>
    <property type="molecule type" value="mRNA"/>
</dbReference>
<dbReference type="EMBL" id="AF130419">
    <property type="protein sequence ID" value="AAD31694.1"/>
    <property type="status" value="ALT_FRAME"/>
    <property type="molecule type" value="mRNA"/>
</dbReference>
<dbReference type="EMBL" id="AF130420">
    <property type="protein sequence ID" value="AAD31695.1"/>
    <property type="molecule type" value="mRNA"/>
</dbReference>
<dbReference type="EMBL" id="AC105754">
    <property type="status" value="NOT_ANNOTATED_CDS"/>
    <property type="molecule type" value="Genomic_DNA"/>
</dbReference>
<dbReference type="EMBL" id="AL513218">
    <property type="status" value="NOT_ANNOTATED_CDS"/>
    <property type="molecule type" value="Genomic_DNA"/>
</dbReference>
<dbReference type="EMBL" id="CH471059">
    <property type="protein sequence ID" value="EAX06790.1"/>
    <property type="molecule type" value="Genomic_DNA"/>
</dbReference>
<dbReference type="EMBL" id="CH471059">
    <property type="protein sequence ID" value="EAX06791.1"/>
    <property type="molecule type" value="Genomic_DNA"/>
</dbReference>
<dbReference type="EMBL" id="BC032680">
    <property type="protein sequence ID" value="AAH32680.1"/>
    <property type="molecule type" value="mRNA"/>
</dbReference>
<dbReference type="CCDS" id="CCDS563.1">
    <molecule id="O95405-1"/>
</dbReference>
<dbReference type="CCDS" id="CCDS564.1">
    <molecule id="O95405-2"/>
</dbReference>
<dbReference type="RefSeq" id="NP_004790.2">
    <molecule id="O95405-1"/>
    <property type="nucleotide sequence ID" value="NM_004799.3"/>
</dbReference>
<dbReference type="RefSeq" id="NP_015563.2">
    <molecule id="O95405-2"/>
    <property type="nucleotide sequence ID" value="NM_007324.3"/>
</dbReference>
<dbReference type="RefSeq" id="XP_011540739.1">
    <molecule id="O95405-1"/>
    <property type="nucleotide sequence ID" value="XM_011542437.3"/>
</dbReference>
<dbReference type="RefSeq" id="XP_047290630.1">
    <molecule id="O95405-2"/>
    <property type="nucleotide sequence ID" value="XM_047434674.1"/>
</dbReference>
<dbReference type="RefSeq" id="XP_054195648.1">
    <molecule id="O95405-1"/>
    <property type="nucleotide sequence ID" value="XM_054339673.1"/>
</dbReference>
<dbReference type="RefSeq" id="XP_054195649.1">
    <molecule id="O95405-2"/>
    <property type="nucleotide sequence ID" value="XM_054339674.1"/>
</dbReference>
<dbReference type="PDB" id="1DEV">
    <property type="method" value="X-ray"/>
    <property type="resolution" value="2.20 A"/>
    <property type="chains" value="B/D=771-811"/>
</dbReference>
<dbReference type="PDB" id="1MK2">
    <property type="method" value="X-ray"/>
    <property type="resolution" value="2.74 A"/>
    <property type="chains" value="B=773-810"/>
</dbReference>
<dbReference type="PDB" id="4BKW">
    <property type="method" value="X-ray"/>
    <property type="resolution" value="2.53 A"/>
    <property type="chains" value="A=895-1425"/>
</dbReference>
<dbReference type="PDB" id="5MJY">
    <property type="method" value="X-ray"/>
    <property type="resolution" value="2.25 A"/>
    <property type="chains" value="E/F=1-22"/>
</dbReference>
<dbReference type="PDBsum" id="1DEV"/>
<dbReference type="PDBsum" id="1MK2"/>
<dbReference type="PDBsum" id="4BKW"/>
<dbReference type="PDBsum" id="5MJY"/>
<dbReference type="SMR" id="O95405"/>
<dbReference type="BioGRID" id="114773">
    <property type="interactions" value="108"/>
</dbReference>
<dbReference type="CORUM" id="O95405"/>
<dbReference type="FunCoup" id="O95405">
    <property type="interactions" value="2638"/>
</dbReference>
<dbReference type="IntAct" id="O95405">
    <property type="interactions" value="57"/>
</dbReference>
<dbReference type="MINT" id="O95405"/>
<dbReference type="STRING" id="9606.ENSP00000287727"/>
<dbReference type="GlyCosmos" id="O95405">
    <property type="glycosylation" value="1 site, 1 glycan"/>
</dbReference>
<dbReference type="GlyGen" id="O95405">
    <property type="glycosylation" value="4 sites, 2 N-linked glycans (2 sites), 1 O-linked glycan (1 site)"/>
</dbReference>
<dbReference type="iPTMnet" id="O95405"/>
<dbReference type="PhosphoSitePlus" id="O95405"/>
<dbReference type="SwissPalm" id="O95405"/>
<dbReference type="BioMuta" id="ZFYVE9"/>
<dbReference type="jPOST" id="O95405"/>
<dbReference type="MassIVE" id="O95405"/>
<dbReference type="PaxDb" id="9606-ENSP00000287727"/>
<dbReference type="PeptideAtlas" id="O95405"/>
<dbReference type="ProteomicsDB" id="50856">
    <molecule id="O95405-1"/>
</dbReference>
<dbReference type="ProteomicsDB" id="50857">
    <molecule id="O95405-2"/>
</dbReference>
<dbReference type="ProteomicsDB" id="50858">
    <molecule id="O95405-3"/>
</dbReference>
<dbReference type="Pumba" id="O95405"/>
<dbReference type="Antibodypedia" id="32995">
    <property type="antibodies" value="120 antibodies from 27 providers"/>
</dbReference>
<dbReference type="DNASU" id="9372"/>
<dbReference type="Ensembl" id="ENST00000287727.8">
    <molecule id="O95405-1"/>
    <property type="protein sequence ID" value="ENSP00000287727.3"/>
    <property type="gene ID" value="ENSG00000157077.16"/>
</dbReference>
<dbReference type="Ensembl" id="ENST00000357206.6">
    <molecule id="O95405-2"/>
    <property type="protein sequence ID" value="ENSP00000349737.2"/>
    <property type="gene ID" value="ENSG00000157077.16"/>
</dbReference>
<dbReference type="Ensembl" id="ENST00000371591.2">
    <molecule id="O95405-1"/>
    <property type="protein sequence ID" value="ENSP00000360647.1"/>
    <property type="gene ID" value="ENSG00000157077.16"/>
</dbReference>
<dbReference type="GeneID" id="9372"/>
<dbReference type="KEGG" id="hsa:9372"/>
<dbReference type="MANE-Select" id="ENST00000287727.8">
    <property type="protein sequence ID" value="ENSP00000287727.3"/>
    <property type="RefSeq nucleotide sequence ID" value="NM_004799.4"/>
    <property type="RefSeq protein sequence ID" value="NP_004790.2"/>
</dbReference>
<dbReference type="UCSC" id="uc001cto.5">
    <molecule id="O95405-1"/>
    <property type="organism name" value="human"/>
</dbReference>
<dbReference type="AGR" id="HGNC:6775"/>
<dbReference type="CTD" id="9372"/>
<dbReference type="DisGeNET" id="9372"/>
<dbReference type="GeneCards" id="ZFYVE9"/>
<dbReference type="HGNC" id="HGNC:6775">
    <property type="gene designation" value="ZFYVE9"/>
</dbReference>
<dbReference type="HPA" id="ENSG00000157077">
    <property type="expression patterns" value="Low tissue specificity"/>
</dbReference>
<dbReference type="MIM" id="603755">
    <property type="type" value="gene"/>
</dbReference>
<dbReference type="neXtProt" id="NX_O95405"/>
<dbReference type="OpenTargets" id="ENSG00000157077"/>
<dbReference type="PharmGKB" id="PA30532"/>
<dbReference type="VEuPathDB" id="HostDB:ENSG00000157077"/>
<dbReference type="eggNOG" id="KOG1841">
    <property type="taxonomic scope" value="Eukaryota"/>
</dbReference>
<dbReference type="GeneTree" id="ENSGT00940000154290"/>
<dbReference type="HOGENOM" id="CLU_004326_1_0_1"/>
<dbReference type="InParanoid" id="O95405"/>
<dbReference type="OMA" id="IPPNCGG"/>
<dbReference type="OrthoDB" id="5872154at2759"/>
<dbReference type="PAN-GO" id="O95405">
    <property type="GO annotations" value="3 GO annotations based on evolutionary models"/>
</dbReference>
<dbReference type="PhylomeDB" id="O95405"/>
<dbReference type="TreeFam" id="TF324904"/>
<dbReference type="PathwayCommons" id="O95405"/>
<dbReference type="Reactome" id="R-HSA-2173788">
    <molecule id="O95405-1"/>
    <property type="pathway name" value="Downregulation of TGF-beta receptor signaling"/>
</dbReference>
<dbReference type="Reactome" id="R-HSA-2173789">
    <molecule id="O95405-1"/>
    <property type="pathway name" value="TGF-beta receptor signaling activates SMADs"/>
</dbReference>
<dbReference type="Reactome" id="R-HSA-3304356">
    <molecule id="O95405-1"/>
    <property type="pathway name" value="SMAD2/3 Phosphorylation Motif Mutants in Cancer"/>
</dbReference>
<dbReference type="Reactome" id="R-HSA-3656532">
    <molecule id="O95405-1"/>
    <property type="pathway name" value="TGFBR1 KD Mutants in Cancer"/>
</dbReference>
<dbReference type="SignaLink" id="O95405"/>
<dbReference type="SIGNOR" id="O95405"/>
<dbReference type="BioGRID-ORCS" id="9372">
    <property type="hits" value="15 hits in 1161 CRISPR screens"/>
</dbReference>
<dbReference type="ChiTaRS" id="ZFYVE9">
    <property type="organism name" value="human"/>
</dbReference>
<dbReference type="EvolutionaryTrace" id="O95405"/>
<dbReference type="GeneWiki" id="Zinc_finger_FYVE_domain-containing_protein_9"/>
<dbReference type="GenomeRNAi" id="9372"/>
<dbReference type="Pharos" id="O95405">
    <property type="development level" value="Tbio"/>
</dbReference>
<dbReference type="PRO" id="PR:O95405"/>
<dbReference type="Proteomes" id="UP000005640">
    <property type="component" value="Chromosome 1"/>
</dbReference>
<dbReference type="RNAct" id="O95405">
    <property type="molecule type" value="protein"/>
</dbReference>
<dbReference type="Bgee" id="ENSG00000157077">
    <property type="expression patterns" value="Expressed in calcaneal tendon and 162 other cell types or tissues"/>
</dbReference>
<dbReference type="GO" id="GO:0005829">
    <property type="term" value="C:cytosol"/>
    <property type="evidence" value="ECO:0000314"/>
    <property type="project" value="HPA"/>
</dbReference>
<dbReference type="GO" id="GO:0005769">
    <property type="term" value="C:early endosome"/>
    <property type="evidence" value="ECO:0000303"/>
    <property type="project" value="UniProtKB"/>
</dbReference>
<dbReference type="GO" id="GO:0031901">
    <property type="term" value="C:early endosome membrane"/>
    <property type="evidence" value="ECO:0000314"/>
    <property type="project" value="UniProtKB"/>
</dbReference>
<dbReference type="GO" id="GO:0043231">
    <property type="term" value="C:intracellular membrane-bounded organelle"/>
    <property type="evidence" value="ECO:0000314"/>
    <property type="project" value="HPA"/>
</dbReference>
<dbReference type="GO" id="GO:0032991">
    <property type="term" value="C:protein-containing complex"/>
    <property type="evidence" value="ECO:0000315"/>
    <property type="project" value="CAFA"/>
</dbReference>
<dbReference type="GO" id="GO:0005545">
    <property type="term" value="F:1-phosphatidylinositol binding"/>
    <property type="evidence" value="ECO:0000314"/>
    <property type="project" value="UniProtKB"/>
</dbReference>
<dbReference type="GO" id="GO:0019904">
    <property type="term" value="F:protein domain specific binding"/>
    <property type="evidence" value="ECO:0000353"/>
    <property type="project" value="CAFA"/>
</dbReference>
<dbReference type="GO" id="GO:0008270">
    <property type="term" value="F:zinc ion binding"/>
    <property type="evidence" value="ECO:0007669"/>
    <property type="project" value="UniProtKB-KW"/>
</dbReference>
<dbReference type="GO" id="GO:0006897">
    <property type="term" value="P:endocytosis"/>
    <property type="evidence" value="ECO:0000303"/>
    <property type="project" value="UniProtKB"/>
</dbReference>
<dbReference type="GO" id="GO:0016197">
    <property type="term" value="P:endosomal transport"/>
    <property type="evidence" value="ECO:0000318"/>
    <property type="project" value="GO_Central"/>
</dbReference>
<dbReference type="GO" id="GO:0007179">
    <property type="term" value="P:transforming growth factor beta receptor signaling pathway"/>
    <property type="evidence" value="ECO:0000315"/>
    <property type="project" value="UniProtKB"/>
</dbReference>
<dbReference type="CDD" id="cd15729">
    <property type="entry name" value="FYVE_endofin"/>
    <property type="match status" value="1"/>
</dbReference>
<dbReference type="FunFam" id="3.30.1360.220:FF:000001">
    <property type="entry name" value="Zinc finger, FYVE domain-containing 9a"/>
    <property type="match status" value="1"/>
</dbReference>
<dbReference type="FunFam" id="3.30.500.40:FF:000001">
    <property type="entry name" value="Zinc finger, FYVE domain-containing 9a"/>
    <property type="match status" value="1"/>
</dbReference>
<dbReference type="FunFam" id="4.10.720.10:FF:000001">
    <property type="entry name" value="Zinc finger, FYVE domain-containing 9a"/>
    <property type="match status" value="1"/>
</dbReference>
<dbReference type="FunFam" id="3.30.40.10:FF:000084">
    <property type="entry name" value="Zinc finger, FYVE domain-containing 9b"/>
    <property type="match status" value="1"/>
</dbReference>
<dbReference type="Gene3D" id="3.30.500.40">
    <property type="match status" value="1"/>
</dbReference>
<dbReference type="Gene3D" id="3.30.1360.220">
    <property type="entry name" value="Domain of unknown function (DUF3480), N-terminal subdomain"/>
    <property type="match status" value="1"/>
</dbReference>
<dbReference type="Gene3D" id="4.10.720.10">
    <property type="entry name" value="Smad anchor for receptor activation, Smad-binding domain"/>
    <property type="match status" value="1"/>
</dbReference>
<dbReference type="Gene3D" id="3.30.40.10">
    <property type="entry name" value="Zinc/RING finger domain, C3HC4 (zinc finger)"/>
    <property type="match status" value="1"/>
</dbReference>
<dbReference type="IDEAL" id="IID00112"/>
<dbReference type="InterPro" id="IPR022557">
    <property type="entry name" value="SARA-like_C"/>
</dbReference>
<dbReference type="InterPro" id="IPR024608">
    <property type="entry name" value="SARA-like_SBD"/>
</dbReference>
<dbReference type="InterPro" id="IPR035438">
    <property type="entry name" value="SARA/endofin"/>
</dbReference>
<dbReference type="InterPro" id="IPR037145">
    <property type="entry name" value="SARA_Smad-bd_sf"/>
</dbReference>
<dbReference type="InterPro" id="IPR000306">
    <property type="entry name" value="Znf_FYVE"/>
</dbReference>
<dbReference type="InterPro" id="IPR017455">
    <property type="entry name" value="Znf_FYVE-rel"/>
</dbReference>
<dbReference type="InterPro" id="IPR011011">
    <property type="entry name" value="Znf_FYVE_PHD"/>
</dbReference>
<dbReference type="InterPro" id="IPR013083">
    <property type="entry name" value="Znf_RING/FYVE/PHD"/>
</dbReference>
<dbReference type="PANTHER" id="PTHR46319">
    <property type="entry name" value="ZINC FINGER FYVE DOMAIN-CONTAINING PROTEIN"/>
    <property type="match status" value="1"/>
</dbReference>
<dbReference type="PANTHER" id="PTHR46319:SF2">
    <property type="entry name" value="ZINC FINGER FYVE DOMAIN-CONTAINING PROTEIN 9"/>
    <property type="match status" value="1"/>
</dbReference>
<dbReference type="Pfam" id="PF01363">
    <property type="entry name" value="FYVE"/>
    <property type="match status" value="1"/>
</dbReference>
<dbReference type="Pfam" id="PF11409">
    <property type="entry name" value="SARA"/>
    <property type="match status" value="1"/>
</dbReference>
<dbReference type="Pfam" id="PF11979">
    <property type="entry name" value="SARA_C"/>
    <property type="match status" value="1"/>
</dbReference>
<dbReference type="PIRSF" id="PIRSF037289">
    <property type="entry name" value="SARA/endofin"/>
    <property type="match status" value="1"/>
</dbReference>
<dbReference type="SMART" id="SM01421">
    <property type="entry name" value="DUF3480"/>
    <property type="match status" value="1"/>
</dbReference>
<dbReference type="SMART" id="SM00064">
    <property type="entry name" value="FYVE"/>
    <property type="match status" value="1"/>
</dbReference>
<dbReference type="SMART" id="SM01422">
    <property type="entry name" value="SARA"/>
    <property type="match status" value="1"/>
</dbReference>
<dbReference type="SUPFAM" id="SSF57903">
    <property type="entry name" value="FYVE/PHD zinc finger"/>
    <property type="match status" value="1"/>
</dbReference>
<dbReference type="PROSITE" id="PS50178">
    <property type="entry name" value="ZF_FYVE"/>
    <property type="match status" value="1"/>
</dbReference>
<organism>
    <name type="scientific">Homo sapiens</name>
    <name type="common">Human</name>
    <dbReference type="NCBI Taxonomy" id="9606"/>
    <lineage>
        <taxon>Eukaryota</taxon>
        <taxon>Metazoa</taxon>
        <taxon>Chordata</taxon>
        <taxon>Craniata</taxon>
        <taxon>Vertebrata</taxon>
        <taxon>Euteleostomi</taxon>
        <taxon>Mammalia</taxon>
        <taxon>Eutheria</taxon>
        <taxon>Euarchontoglires</taxon>
        <taxon>Primates</taxon>
        <taxon>Haplorrhini</taxon>
        <taxon>Catarrhini</taxon>
        <taxon>Hominidae</taxon>
        <taxon>Homo</taxon>
    </lineage>
</organism>
<gene>
    <name type="primary">ZFYVE9</name>
    <name type="synonym">MADHIP</name>
    <name type="synonym">SARA</name>
    <name type="synonym">SMADIP</name>
</gene>
<accession>O95405</accession>
<accession>Q5T0F6</accession>
<accession>Q5T0F7</accession>
<accession>Q9UNE1</accession>
<accession>Q9Y5R7</accession>
<evidence type="ECO:0000255" key="1">
    <source>
        <dbReference type="PROSITE-ProRule" id="PRU00091"/>
    </source>
</evidence>
<evidence type="ECO:0000256" key="2">
    <source>
        <dbReference type="SAM" id="MobiDB-lite"/>
    </source>
</evidence>
<evidence type="ECO:0000269" key="3">
    <source>
    </source>
</evidence>
<evidence type="ECO:0000269" key="4">
    <source>
    </source>
</evidence>
<evidence type="ECO:0000269" key="5">
    <source>
    </source>
</evidence>
<evidence type="ECO:0000269" key="6">
    <source>
    </source>
</evidence>
<evidence type="ECO:0000303" key="7">
    <source>
    </source>
</evidence>
<evidence type="ECO:0000305" key="8"/>
<evidence type="ECO:0007744" key="9">
    <source>
    </source>
</evidence>
<evidence type="ECO:0007744" key="10">
    <source>
    </source>
</evidence>
<evidence type="ECO:0007829" key="11">
    <source>
        <dbReference type="PDB" id="1DEV"/>
    </source>
</evidence>
<evidence type="ECO:0007829" key="12">
    <source>
        <dbReference type="PDB" id="1MK2"/>
    </source>
</evidence>
<evidence type="ECO:0007829" key="13">
    <source>
        <dbReference type="PDB" id="4BKW"/>
    </source>
</evidence>
<evidence type="ECO:0007829" key="14">
    <source>
        <dbReference type="PDB" id="5MJY"/>
    </source>
</evidence>
<protein>
    <recommendedName>
        <fullName>Zinc finger FYVE domain-containing protein 9</fullName>
    </recommendedName>
    <alternativeName>
        <fullName>Mothers against decapentaplegic homolog-interacting protein</fullName>
        <shortName>Madh-interacting protein</shortName>
    </alternativeName>
    <alternativeName>
        <fullName>Novel serine protease</fullName>
        <shortName>NSP</shortName>
    </alternativeName>
    <alternativeName>
        <fullName>Receptor activation anchor</fullName>
        <shortName>hSARA</shortName>
    </alternativeName>
    <alternativeName>
        <fullName>Smad anchor for receptor activation</fullName>
    </alternativeName>
</protein>
<proteinExistence type="evidence at protein level"/>
<name>ZFYV9_HUMAN</name>
<keyword id="KW-0002">3D-structure</keyword>
<keyword id="KW-0025">Alternative splicing</keyword>
<keyword id="KW-0963">Cytoplasm</keyword>
<keyword id="KW-0967">Endosome</keyword>
<keyword id="KW-0472">Membrane</keyword>
<keyword id="KW-0479">Metal-binding</keyword>
<keyword id="KW-0597">Phosphoprotein</keyword>
<keyword id="KW-1267">Proteomics identification</keyword>
<keyword id="KW-0675">Receptor</keyword>
<keyword id="KW-1185">Reference proteome</keyword>
<keyword id="KW-0862">Zinc</keyword>
<keyword id="KW-0863">Zinc-finger</keyword>
<feature type="chain" id="PRO_0000098715" description="Zinc finger FYVE domain-containing protein 9">
    <location>
        <begin position="1"/>
        <end position="1425"/>
    </location>
</feature>
<feature type="zinc finger region" description="FYVE-type" evidence="1">
    <location>
        <begin position="699"/>
        <end position="758"/>
    </location>
</feature>
<feature type="region of interest" description="Disordered" evidence="2">
    <location>
        <begin position="201"/>
        <end position="255"/>
    </location>
</feature>
<feature type="region of interest" description="Disordered" evidence="2">
    <location>
        <begin position="291"/>
        <end position="352"/>
    </location>
</feature>
<feature type="region of interest" description="SBD">
    <location>
        <begin position="767"/>
        <end position="823"/>
    </location>
</feature>
<feature type="compositionally biased region" description="Basic and acidic residues" evidence="2">
    <location>
        <begin position="202"/>
        <end position="225"/>
    </location>
</feature>
<feature type="compositionally biased region" description="Polar residues" evidence="2">
    <location>
        <begin position="230"/>
        <end position="245"/>
    </location>
</feature>
<feature type="compositionally biased region" description="Polar residues" evidence="2">
    <location>
        <begin position="296"/>
        <end position="312"/>
    </location>
</feature>
<feature type="binding site" evidence="1">
    <location>
        <position position="705"/>
    </location>
    <ligand>
        <name>Zn(2+)</name>
        <dbReference type="ChEBI" id="CHEBI:29105"/>
        <label>1</label>
    </ligand>
</feature>
<feature type="binding site" evidence="1">
    <location>
        <position position="708"/>
    </location>
    <ligand>
        <name>Zn(2+)</name>
        <dbReference type="ChEBI" id="CHEBI:29105"/>
        <label>1</label>
    </ligand>
</feature>
<feature type="binding site" evidence="1">
    <location>
        <position position="721"/>
    </location>
    <ligand>
        <name>Zn(2+)</name>
        <dbReference type="ChEBI" id="CHEBI:29105"/>
        <label>2</label>
    </ligand>
</feature>
<feature type="binding site" evidence="1">
    <location>
        <position position="724"/>
    </location>
    <ligand>
        <name>Zn(2+)</name>
        <dbReference type="ChEBI" id="CHEBI:29105"/>
        <label>2</label>
    </ligand>
</feature>
<feature type="binding site" evidence="1">
    <location>
        <position position="729"/>
    </location>
    <ligand>
        <name>Zn(2+)</name>
        <dbReference type="ChEBI" id="CHEBI:29105"/>
        <label>1</label>
    </ligand>
</feature>
<feature type="binding site" evidence="1">
    <location>
        <position position="732"/>
    </location>
    <ligand>
        <name>Zn(2+)</name>
        <dbReference type="ChEBI" id="CHEBI:29105"/>
        <label>1</label>
    </ligand>
</feature>
<feature type="binding site" evidence="1">
    <location>
        <position position="750"/>
    </location>
    <ligand>
        <name>Zn(2+)</name>
        <dbReference type="ChEBI" id="CHEBI:29105"/>
        <label>2</label>
    </ligand>
</feature>
<feature type="binding site" evidence="1">
    <location>
        <position position="753"/>
    </location>
    <ligand>
        <name>Zn(2+)</name>
        <dbReference type="ChEBI" id="CHEBI:29105"/>
        <label>2</label>
    </ligand>
</feature>
<feature type="modified residue" description="Phosphoserine" evidence="9">
    <location>
        <position position="306"/>
    </location>
</feature>
<feature type="modified residue" description="Phosphoserine" evidence="10">
    <location>
        <position position="668"/>
    </location>
</feature>
<feature type="splice variant" id="VSP_004315" description="In isoform 2." evidence="7">
    <location>
        <begin position="760"/>
        <end position="818"/>
    </location>
</feature>
<feature type="splice variant" id="VSP_004316" description="In isoform 3." evidence="7">
    <original>AQA</original>
    <variation>GKY</variation>
    <location>
        <begin position="760"/>
        <end position="762"/>
    </location>
</feature>
<feature type="splice variant" id="VSP_004317" description="In isoform 3." evidence="7">
    <location>
        <begin position="763"/>
        <end position="1425"/>
    </location>
</feature>
<feature type="sequence variant" id="VAR_052985" description="In dbSNP:rs9803965.">
    <original>Y</original>
    <variation>C</variation>
    <location>
        <position position="287"/>
    </location>
</feature>
<feature type="sequence variant" id="VAR_052986" description="In dbSNP:rs3790525.">
    <original>Q</original>
    <variation>P</variation>
    <location>
        <position position="414"/>
    </location>
</feature>
<feature type="sequence variant" id="VAR_052987" description="In dbSNP:rs11809887.">
    <original>I</original>
    <variation>V</variation>
    <location>
        <position position="639"/>
    </location>
</feature>
<feature type="mutagenesis site" description="Diminishes complex formation with SMAD2." evidence="3">
    <original>Y</original>
    <variation>A</variation>
    <location>
        <position position="782"/>
    </location>
</feature>
<feature type="mutagenesis site" description="Diminishes complex formation with SMAD2." evidence="3">
    <original>Y</original>
    <variation>E</variation>
    <location>
        <position position="782"/>
    </location>
</feature>
<feature type="mutagenesis site" description="Diminishes complex formation with SMAD2." evidence="3">
    <original>C</original>
    <variation>A</variation>
    <location>
        <position position="783"/>
    </location>
</feature>
<feature type="mutagenesis site" description="Diminishes complex formation with SMAD2." evidence="3">
    <original>C</original>
    <variation>E</variation>
    <location>
        <position position="783"/>
    </location>
</feature>
<feature type="mutagenesis site" description="Diminishes complex formation with SMAD2." evidence="3">
    <original>P</original>
    <variation>A</variation>
    <location>
        <position position="788"/>
    </location>
</feature>
<feature type="mutagenesis site" description="Diminishes complex formation with SMAD2." evidence="3">
    <original>P</original>
    <variation>E</variation>
    <location>
        <position position="788"/>
    </location>
</feature>
<feature type="mutagenesis site" description="No effect on complex formation with SMAD2." evidence="3">
    <original>Q</original>
    <variation>A</variation>
    <location>
        <position position="790"/>
    </location>
</feature>
<feature type="mutagenesis site" description="No effect on complex formation with SMAD2." evidence="3">
    <original>Q</original>
    <variation>A</variation>
    <location>
        <position position="793"/>
    </location>
</feature>
<feature type="mutagenesis site" description="Diminishes complex formation with SMAD2." evidence="3">
    <original>V</original>
    <variation>A</variation>
    <location>
        <position position="805"/>
    </location>
</feature>
<feature type="mutagenesis site" description="Diminishes complex formation with SMAD2." evidence="3">
    <original>V</original>
    <variation>E</variation>
    <location>
        <position position="805"/>
    </location>
</feature>
<feature type="helix" evidence="14">
    <location>
        <begin position="4"/>
        <end position="20"/>
    </location>
</feature>
<feature type="helix" evidence="11">
    <location>
        <begin position="779"/>
        <end position="781"/>
    </location>
</feature>
<feature type="helix" evidence="11">
    <location>
        <begin position="788"/>
        <end position="792"/>
    </location>
</feature>
<feature type="turn" evidence="11">
    <location>
        <begin position="793"/>
        <end position="795"/>
    </location>
</feature>
<feature type="strand" evidence="12">
    <location>
        <begin position="797"/>
        <end position="800"/>
    </location>
</feature>
<feature type="strand" evidence="11">
    <location>
        <begin position="804"/>
        <end position="807"/>
    </location>
</feature>
<feature type="strand" evidence="13">
    <location>
        <begin position="901"/>
        <end position="903"/>
    </location>
</feature>
<feature type="strand" evidence="13">
    <location>
        <begin position="907"/>
        <end position="909"/>
    </location>
</feature>
<feature type="strand" evidence="13">
    <location>
        <begin position="918"/>
        <end position="922"/>
    </location>
</feature>
<feature type="helix" evidence="13">
    <location>
        <begin position="925"/>
        <end position="932"/>
    </location>
</feature>
<feature type="strand" evidence="13">
    <location>
        <begin position="940"/>
        <end position="945"/>
    </location>
</feature>
<feature type="strand" evidence="13">
    <location>
        <begin position="948"/>
        <end position="957"/>
    </location>
</feature>
<feature type="strand" evidence="13">
    <location>
        <begin position="960"/>
        <end position="970"/>
    </location>
</feature>
<feature type="helix" evidence="13">
    <location>
        <begin position="971"/>
        <end position="973"/>
    </location>
</feature>
<feature type="strand" evidence="13">
    <location>
        <begin position="977"/>
        <end position="983"/>
    </location>
</feature>
<feature type="helix" evidence="13">
    <location>
        <begin position="994"/>
        <end position="1007"/>
    </location>
</feature>
<feature type="strand" evidence="13">
    <location>
        <begin position="1017"/>
        <end position="1019"/>
    </location>
</feature>
<feature type="strand" evidence="13">
    <location>
        <begin position="1030"/>
        <end position="1036"/>
    </location>
</feature>
<feature type="strand" evidence="13">
    <location>
        <begin position="1039"/>
        <end position="1041"/>
    </location>
</feature>
<feature type="strand" evidence="13">
    <location>
        <begin position="1050"/>
        <end position="1060"/>
    </location>
</feature>
<feature type="turn" evidence="13">
    <location>
        <begin position="1061"/>
        <end position="1063"/>
    </location>
</feature>
<feature type="helix" evidence="13">
    <location>
        <begin position="1064"/>
        <end position="1069"/>
    </location>
</feature>
<feature type="helix" evidence="13">
    <location>
        <begin position="1071"/>
        <end position="1082"/>
    </location>
</feature>
<feature type="strand" evidence="13">
    <location>
        <begin position="1089"/>
        <end position="1091"/>
    </location>
</feature>
<feature type="helix" evidence="13">
    <location>
        <begin position="1106"/>
        <end position="1109"/>
    </location>
</feature>
<feature type="strand" evidence="13">
    <location>
        <begin position="1113"/>
        <end position="1115"/>
    </location>
</feature>
<feature type="strand" evidence="13">
    <location>
        <begin position="1127"/>
        <end position="1131"/>
    </location>
</feature>
<feature type="strand" evidence="13">
    <location>
        <begin position="1134"/>
        <end position="1140"/>
    </location>
</feature>
<feature type="helix" evidence="13">
    <location>
        <begin position="1141"/>
        <end position="1143"/>
    </location>
</feature>
<feature type="helix" evidence="13">
    <location>
        <begin position="1144"/>
        <end position="1152"/>
    </location>
</feature>
<feature type="strand" evidence="13">
    <location>
        <begin position="1156"/>
        <end position="1162"/>
    </location>
</feature>
<feature type="strand" evidence="13">
    <location>
        <begin position="1170"/>
        <end position="1177"/>
    </location>
</feature>
<feature type="strand" evidence="13">
    <location>
        <begin position="1183"/>
        <end position="1192"/>
    </location>
</feature>
<feature type="strand" evidence="13">
    <location>
        <begin position="1196"/>
        <end position="1199"/>
    </location>
</feature>
<feature type="strand" evidence="13">
    <location>
        <begin position="1201"/>
        <end position="1207"/>
    </location>
</feature>
<feature type="strand" evidence="13">
    <location>
        <begin position="1218"/>
        <end position="1222"/>
    </location>
</feature>
<feature type="strand" evidence="13">
    <location>
        <begin position="1225"/>
        <end position="1229"/>
    </location>
</feature>
<feature type="helix" evidence="13">
    <location>
        <begin position="1232"/>
        <end position="1243"/>
    </location>
</feature>
<feature type="strand" evidence="13">
    <location>
        <begin position="1248"/>
        <end position="1250"/>
    </location>
</feature>
<feature type="strand" evidence="13">
    <location>
        <begin position="1263"/>
        <end position="1270"/>
    </location>
</feature>
<feature type="turn" evidence="13">
    <location>
        <begin position="1282"/>
        <end position="1284"/>
    </location>
</feature>
<feature type="strand" evidence="13">
    <location>
        <begin position="1291"/>
        <end position="1295"/>
    </location>
</feature>
<feature type="strand" evidence="13">
    <location>
        <begin position="1302"/>
        <end position="1304"/>
    </location>
</feature>
<feature type="strand" evidence="13">
    <location>
        <begin position="1307"/>
        <end position="1316"/>
    </location>
</feature>
<feature type="helix" evidence="13">
    <location>
        <begin position="1334"/>
        <end position="1347"/>
    </location>
</feature>
<feature type="helix" evidence="13">
    <location>
        <begin position="1348"/>
        <end position="1350"/>
    </location>
</feature>
<feature type="helix" evidence="13">
    <location>
        <begin position="1351"/>
        <end position="1356"/>
    </location>
</feature>
<feature type="strand" evidence="13">
    <location>
        <begin position="1361"/>
        <end position="1368"/>
    </location>
</feature>
<feature type="strand" evidence="13">
    <location>
        <begin position="1373"/>
        <end position="1379"/>
    </location>
</feature>
<feature type="helix" evidence="13">
    <location>
        <begin position="1386"/>
        <end position="1388"/>
    </location>
</feature>
<feature type="helix" evidence="13">
    <location>
        <begin position="1389"/>
        <end position="1400"/>
    </location>
</feature>
<feature type="strand" evidence="13">
    <location>
        <begin position="1413"/>
        <end position="1422"/>
    </location>
</feature>
<sequence>MENYFQAEAYNLDKVLDEFEQNEDETVSSTLLDTKWNKILDPPSHRLSFNPTLASVNESAVSNESQPQLKVFSLAHSAPLTTEEEDHCANGQDCNLNPEIATMWIDENAVAEDQLIKRNYSWDDQCSAVEVGEKKCGNLACLPDEKNVLVVAVMHNCDKRTLQNDLQDCNNYNSQSLMDAFSCSLDNENRQTDQFSFSINESTEKDMNSEKQMDPLNRPKTEGRSVNHLCPTSSDSLASVCSPSQLKDDGSIGRDPSMSAITSLTVDSVISSQGTDGCPAVKKQENYIPDEDLTGKISSPRTDLGSPNSFSHMSEGILMKKEPAEESTTEESLRSGLPLLLKPDMPNGSGRNNDCERCSDCLVPNEVRADENEGYEHEETLGTTEFLNMTEHFSESQDMTNWKLTKLNEMNDSQVNEEKEKFLQISQPEDTNGDSGGQCVGLADAGLDLKGTCISESEECDFSTVIDTPAANYLSNGCDSYGMQDPGVSFVPKTLPSKEDSVTEEKEIEESKSECYSNIYEQRGNEATEGSGLLLNSTGDLMKKNYLHNFCSQVPSVLGQSSPKVVASLPSISVPFGGARPKQPSNLKLQIPKPLSDHLQNDFPANSGNNTKNKNDILGKAKLGENSATNVCSPSLGNISNVDTNGEHLESYEAEISTRPCLALAPDSPDNDLRAGQFGISARKPFTTLGEVAPVWVPDSQAPNCMKCEARFTFTKRRHHCRACGKVFCASCCSLKCKLLYMDRKEARVCVICHSVLMNAQAWENMMSASSQSPNPNNPAEYCSTIPPLQQAQASGALSSPPPTVMVPVGVLKHPGAEVAQPREQRRVWFADGILPNGEVADAAKLTMNGTSSAGTLAVSHDPVKPVTTSPLPAETDICLFSGSITQVGSPVGSAMNLIPEDGLPPILISTGVKGDYAVEEKPSQISVMQQLEDGGPDPLVFVLNANLLSMVKIVNYVNRKCWCFTTKGMHAVGQSEIVILLQCLPDEKCLPKDIFNHFVQLYRDALAGNVVSNLGHSFFSQSFLGSKEHGGFLYVTSTYQSLQDLVLPTPPYLFGILIQKWETPWAKVFPIRLMLRLGAEYRLYPCPLFSVRFRKPLFGETGHTIMNLLADFRNYQYTLPVVQGLVVDMEVRKTSIKIPSNRYNEMMKAMNKSNEHVLAGGACFNEKADSHLVCVQNDDGNYQTQAISIHNQPRKVTGASFFVFSGALKSSSGYLAKSSIVEDGVMVQITAENMDSLRQALREMKDFTITCGKADAEEPQEHIHIQWVDDDKNVSKGVVSPIDGKSMETITNVKIFHGSEYKANGKVIRWTEVFFLENDDQHNCLSDPADHSRLTEHVAKAFCLALCPHLKLLKEDGMTKLGLRVTLDSDQVGYQAGSNGQPLPSQYMNDLDSALVPVIHGGACQLSEGPVVMELIFYILENIV</sequence>